<feature type="chain" id="PRO_0000271097" description="UPF0739 protein C1orf74 homolog">
    <location>
        <begin position="1"/>
        <end position="262"/>
    </location>
</feature>
<organism>
    <name type="scientific">Xenopus laevis</name>
    <name type="common">African clawed frog</name>
    <dbReference type="NCBI Taxonomy" id="8355"/>
    <lineage>
        <taxon>Eukaryota</taxon>
        <taxon>Metazoa</taxon>
        <taxon>Chordata</taxon>
        <taxon>Craniata</taxon>
        <taxon>Vertebrata</taxon>
        <taxon>Euteleostomi</taxon>
        <taxon>Amphibia</taxon>
        <taxon>Batrachia</taxon>
        <taxon>Anura</taxon>
        <taxon>Pipoidea</taxon>
        <taxon>Pipidae</taxon>
        <taxon>Xenopodinae</taxon>
        <taxon>Xenopus</taxon>
        <taxon>Xenopus</taxon>
    </lineage>
</organism>
<comment type="similarity">
    <text evidence="1">Belongs to the UPF0739 family.</text>
</comment>
<comment type="sequence caution" evidence="1">
    <conflict type="erroneous initiation">
        <sequence resource="EMBL-CDS" id="AAH87309"/>
    </conflict>
</comment>
<keyword id="KW-1185">Reference proteome</keyword>
<evidence type="ECO:0000305" key="1"/>
<reference key="1">
    <citation type="submission" date="2004-12" db="EMBL/GenBank/DDBJ databases">
        <authorList>
            <consortium name="NIH - Xenopus Gene Collection (XGC) project"/>
        </authorList>
    </citation>
    <scope>NUCLEOTIDE SEQUENCE [LARGE SCALE MRNA]</scope>
    <source>
        <tissue>Testis</tissue>
    </source>
</reference>
<dbReference type="EMBL" id="BC087309">
    <property type="protein sequence ID" value="AAH87309.1"/>
    <property type="status" value="ALT_INIT"/>
    <property type="molecule type" value="mRNA"/>
</dbReference>
<dbReference type="RefSeq" id="NP_001088680.2">
    <property type="nucleotide sequence ID" value="NM_001095211.1"/>
</dbReference>
<dbReference type="DNASU" id="495943"/>
<dbReference type="GeneID" id="495943"/>
<dbReference type="KEGG" id="xla:495943"/>
<dbReference type="AGR" id="Xenbase:XB-GENE-951030"/>
<dbReference type="CTD" id="495943"/>
<dbReference type="Xenbase" id="XB-GENE-951030">
    <property type="gene designation" value="c2h1orf74.L"/>
</dbReference>
<dbReference type="OrthoDB" id="10056365at2759"/>
<dbReference type="Proteomes" id="UP000186698">
    <property type="component" value="Chromosome 2L"/>
</dbReference>
<dbReference type="Bgee" id="495943">
    <property type="expression patterns" value="Expressed in spleen and 19 other cell types or tissues"/>
</dbReference>
<dbReference type="InterPro" id="IPR027850">
    <property type="entry name" value="DUF4504"/>
</dbReference>
<dbReference type="PANTHER" id="PTHR31366">
    <property type="entry name" value="UPF0739 PROTEIN C1ORF74"/>
    <property type="match status" value="1"/>
</dbReference>
<dbReference type="PANTHER" id="PTHR31366:SF2">
    <property type="entry name" value="UPF0739 PROTEIN C1ORF74"/>
    <property type="match status" value="1"/>
</dbReference>
<dbReference type="Pfam" id="PF14953">
    <property type="entry name" value="DUF4504"/>
    <property type="match status" value="1"/>
</dbReference>
<protein>
    <recommendedName>
        <fullName>UPF0739 protein C1orf74 homolog</fullName>
    </recommendedName>
</protein>
<sequence length="262" mass="29560">MASSLHKHLLSAARHHLKETKRMSMMVALNLAAEILAVDCGLKPCFLYDYTTSGVQQICSYLKELQNLGLIVGHLHILNVEETILIINVTKAVSYLETLLHSQDLHLIDVSNYLSQPELVSSNQVPQIHAQLAELLGHIKPYQSGQPTSVSVGGIQSPEWNLCTMFGFLLQFPSTYWFDTQKGFENCLSFTPLRLFTVQANCSRIGHQSVQIYSFTVPECVYQATQVHLEDWSKSLKQAFNEQNYFTDLEIITNTAQVCCVY</sequence>
<name>CA074_XENLA</name>
<proteinExistence type="evidence at transcript level"/>
<accession>Q5PQ92</accession>